<name>Y4937_BACCR</name>
<sequence length="79" mass="8654">MIKPLIEFCVGNLASGSQAALEKLEKDPNLDVMEYGCLGYCGICFEGPFALVNGEVVQGATVEELVNNVYEYLDENPMF</sequence>
<comment type="similarity">
    <text evidence="1">Belongs to the UPF0349 family.</text>
</comment>
<proteinExistence type="inferred from homology"/>
<feature type="chain" id="PRO_0000165883" description="UPF0349 protein BC_4937">
    <location>
        <begin position="1"/>
        <end position="79"/>
    </location>
</feature>
<dbReference type="EMBL" id="AE016877">
    <property type="protein sequence ID" value="AAP11810.1"/>
    <property type="molecule type" value="Genomic_DNA"/>
</dbReference>
<dbReference type="RefSeq" id="NP_834609.1">
    <property type="nucleotide sequence ID" value="NC_004722.1"/>
</dbReference>
<dbReference type="RefSeq" id="WP_000595026.1">
    <property type="nucleotide sequence ID" value="NZ_CP138336.1"/>
</dbReference>
<dbReference type="SMR" id="Q816D0"/>
<dbReference type="STRING" id="226900.BC_4937"/>
<dbReference type="KEGG" id="bce:BC4937"/>
<dbReference type="PATRIC" id="fig|226900.8.peg.5089"/>
<dbReference type="HOGENOM" id="CLU_182025_0_0_9"/>
<dbReference type="OrthoDB" id="1684419at2"/>
<dbReference type="Proteomes" id="UP000001417">
    <property type="component" value="Chromosome"/>
</dbReference>
<dbReference type="HAMAP" id="MF_01542">
    <property type="entry name" value="UPF0349"/>
    <property type="match status" value="1"/>
</dbReference>
<dbReference type="InterPro" id="IPR009910">
    <property type="entry name" value="DUF1450"/>
</dbReference>
<dbReference type="InterPro" id="IPR022916">
    <property type="entry name" value="UPF0349"/>
</dbReference>
<dbReference type="NCBIfam" id="NF010190">
    <property type="entry name" value="PRK13669.1"/>
    <property type="match status" value="1"/>
</dbReference>
<dbReference type="Pfam" id="PF07293">
    <property type="entry name" value="DUF1450"/>
    <property type="match status" value="1"/>
</dbReference>
<accession>Q816D0</accession>
<organism>
    <name type="scientific">Bacillus cereus (strain ATCC 14579 / DSM 31 / CCUG 7414 / JCM 2152 / NBRC 15305 / NCIMB 9373 / NCTC 2599 / NRRL B-3711)</name>
    <dbReference type="NCBI Taxonomy" id="226900"/>
    <lineage>
        <taxon>Bacteria</taxon>
        <taxon>Bacillati</taxon>
        <taxon>Bacillota</taxon>
        <taxon>Bacilli</taxon>
        <taxon>Bacillales</taxon>
        <taxon>Bacillaceae</taxon>
        <taxon>Bacillus</taxon>
        <taxon>Bacillus cereus group</taxon>
    </lineage>
</organism>
<evidence type="ECO:0000255" key="1">
    <source>
        <dbReference type="HAMAP-Rule" id="MF_01542"/>
    </source>
</evidence>
<protein>
    <recommendedName>
        <fullName evidence="1">UPF0349 protein BC_4937</fullName>
    </recommendedName>
</protein>
<reference key="1">
    <citation type="journal article" date="2003" name="Nature">
        <title>Genome sequence of Bacillus cereus and comparative analysis with Bacillus anthracis.</title>
        <authorList>
            <person name="Ivanova N."/>
            <person name="Sorokin A."/>
            <person name="Anderson I."/>
            <person name="Galleron N."/>
            <person name="Candelon B."/>
            <person name="Kapatral V."/>
            <person name="Bhattacharyya A."/>
            <person name="Reznik G."/>
            <person name="Mikhailova N."/>
            <person name="Lapidus A."/>
            <person name="Chu L."/>
            <person name="Mazur M."/>
            <person name="Goltsman E."/>
            <person name="Larsen N."/>
            <person name="D'Souza M."/>
            <person name="Walunas T."/>
            <person name="Grechkin Y."/>
            <person name="Pusch G."/>
            <person name="Haselkorn R."/>
            <person name="Fonstein M."/>
            <person name="Ehrlich S.D."/>
            <person name="Overbeek R."/>
            <person name="Kyrpides N.C."/>
        </authorList>
    </citation>
    <scope>NUCLEOTIDE SEQUENCE [LARGE SCALE GENOMIC DNA]</scope>
    <source>
        <strain>ATCC 14579 / DSM 31 / CCUG 7414 / JCM 2152 / NBRC 15305 / NCIMB 9373 / NCTC 2599 / NRRL B-3711</strain>
    </source>
</reference>
<keyword id="KW-1185">Reference proteome</keyword>
<gene>
    <name type="ordered locus">BC_4937</name>
</gene>